<sequence>DTSEFDPLANKEYTEEQKQKLEQEQKELLSQTTTPELEADDGFIVTSASSAQSTPSISALSGNISPDSQTSDPITKAVRETIIQPQKDNLIEQILKDLAALTDRDLAEQKRKEIEEEKEKDKTLSTFFGNPANREFIDKALENPELKKKLESIEIAGYKNVHNTFSTASGYPGGFKPVQWENQVSASDLRATVVKNDAGDELCTLNETTVKTKPFTVAKQDGTQVQISSYREIDFPIKLDKADGSMHLSMVALKADGTKPSKDKAIYFTAHYEEGPNGKPQLKEISSPKPLKFAGTGDDAIAYIEHGGEIYTLAVTRGKYKEMMKEVELNQGQSVDLSQAEDIIIGQGQSKEQPLITPQQTASSSVESPQYKQQVPPITPTNQPLQPETSQMPQSQQVNPNLLNAATALSGSMQDLLNYVNAGLTKEIDSNKQIDLIKEAATAILHNAKSDIAEKQTNIIALAENTVNNQNLTPDAKVAGVNAVLETIKNDQNTPDLEKSKMLEATVAITLNSENLEPKQKEQMLEKTVDVGLSLKDDASRAAAIDGITDAVIKSNLSTEDKGTMLIAVGDKVNVSELSNAEKQKLLGSVLKKGVEAQVLSPAQQQLMQQNLDKITAEQTKKDTIKKVNDILFDPLSSTELKTTNIQAITSNVLDGPATAEVKGEIIQEITNTVAGSSLEAQDKAEIVKGVGETIATHSDTSLSLPNKALIMASAEKGIVESKTNLPDRELMTKGLVDGIYEGKGGPEITKAVSSGIDNSNINDSEKEALKKAKDAASEATLDIETQNLTEGLKGQNIEEHKPRDDIYNKAQEVINAVNPVIEALEKPKAPVVSAEERIVQETSSILNNISKLAVEKVNNFRAMLSSNGNFKTLEKKKEESIKKVDELVKAFGTKSSTEEQQSFIKANLIDDKTLSKEVRLQTIDKLLQEQTQKQAEAIENPSVKTEDVRVVSGKSELKPISKDTPDIEKAKMVVGRDRVNIKENIKIMGALMNARDSIQSENVNKSTPIKRE</sequence>
<feature type="chain" id="PRO_0000097616" description="Antigenic heat-stable 120 kDa protein">
    <location>
        <begin position="1" status="less than"/>
        <end position="1013" status="greater than"/>
    </location>
</feature>
<feature type="region of interest" description="Disordered" evidence="1">
    <location>
        <begin position="1"/>
        <end position="73"/>
    </location>
</feature>
<feature type="region of interest" description="Disordered" evidence="1">
    <location>
        <begin position="348"/>
        <end position="396"/>
    </location>
</feature>
<feature type="compositionally biased region" description="Basic and acidic residues" evidence="1">
    <location>
        <begin position="12"/>
        <end position="27"/>
    </location>
</feature>
<feature type="compositionally biased region" description="Low complexity" evidence="1">
    <location>
        <begin position="47"/>
        <end position="61"/>
    </location>
</feature>
<feature type="compositionally biased region" description="Polar residues" evidence="1">
    <location>
        <begin position="62"/>
        <end position="73"/>
    </location>
</feature>
<feature type="compositionally biased region" description="Polar residues" evidence="1">
    <location>
        <begin position="348"/>
        <end position="373"/>
    </location>
</feature>
<feature type="compositionally biased region" description="Polar residues" evidence="1">
    <location>
        <begin position="380"/>
        <end position="396"/>
    </location>
</feature>
<feature type="non-terminal residue">
    <location>
        <position position="1"/>
    </location>
</feature>
<feature type="non-terminal residue">
    <location>
        <position position="1013"/>
    </location>
</feature>
<comment type="subcellular location">
    <subcellularLocation>
        <location evidence="2">Cytoplasm</location>
    </subcellularLocation>
</comment>
<proteinExistence type="predicted"/>
<gene>
    <name type="primary">sca4</name>
    <name type="synonym">D</name>
</gene>
<protein>
    <recommendedName>
        <fullName>Antigenic heat-stable 120 kDa protein</fullName>
    </recommendedName>
    <alternativeName>
        <fullName>120 kDa antigen</fullName>
    </alternativeName>
    <alternativeName>
        <fullName>Protein PS 120</fullName>
        <shortName>PS120</shortName>
    </alternativeName>
</protein>
<organism>
    <name type="scientific">Rickettsia rhipicephali</name>
    <dbReference type="NCBI Taxonomy" id="33992"/>
    <lineage>
        <taxon>Bacteria</taxon>
        <taxon>Pseudomonadati</taxon>
        <taxon>Pseudomonadota</taxon>
        <taxon>Alphaproteobacteria</taxon>
        <taxon>Rickettsiales</taxon>
        <taxon>Rickettsiaceae</taxon>
        <taxon>Rickettsieae</taxon>
        <taxon>Rickettsia</taxon>
        <taxon>spotted fever group</taxon>
    </lineage>
</organism>
<reference key="1">
    <citation type="journal article" date="2001" name="Int. J. Syst. Evol. Microbiol.">
        <title>Phylogeny of Rickettsia spp. inferred by comparing sequences of 'gene D', which encodes an intracytoplasmic protein.</title>
        <authorList>
            <person name="Sekeyova Z."/>
            <person name="Roux V."/>
            <person name="Raoult D."/>
        </authorList>
    </citation>
    <scope>NUCLEOTIDE SEQUENCE [GENOMIC DNA]</scope>
</reference>
<name>SCA4_RICRH</name>
<dbReference type="EMBL" id="AF155053">
    <property type="protein sequence ID" value="AAK30684.1"/>
    <property type="molecule type" value="Genomic_DNA"/>
</dbReference>
<dbReference type="SMR" id="Q9AJ81"/>
<dbReference type="GO" id="GO:0005737">
    <property type="term" value="C:cytoplasm"/>
    <property type="evidence" value="ECO:0007669"/>
    <property type="project" value="UniProtKB-SubCell"/>
</dbReference>
<dbReference type="InterPro" id="IPR020954">
    <property type="entry name" value="Rickettsia_antigen_120kDa"/>
</dbReference>
<dbReference type="NCBIfam" id="NF038365">
    <property type="entry name" value="Sca4_fam"/>
    <property type="match status" value="1"/>
</dbReference>
<dbReference type="Pfam" id="PF12574">
    <property type="entry name" value="120_Rick_ant"/>
    <property type="match status" value="1"/>
</dbReference>
<keyword id="KW-0963">Cytoplasm</keyword>
<accession>Q9AJ81</accession>
<evidence type="ECO:0000256" key="1">
    <source>
        <dbReference type="SAM" id="MobiDB-lite"/>
    </source>
</evidence>
<evidence type="ECO:0000305" key="2"/>